<sequence length="637" mass="72571">MGLLSQGSPLSWEETQRHADHVRRHGILQFLHIYHAVKDRHKDVLKWGDEVEYMLVSFDHENRKVQLLLNGGDVLETLQEKGERTNPNHPTLWRPEYGSYMIEGTPGQPYGGTMSEFNTVEANMRKRRKEATSVLGEHQALCTITSFPRLGCPGFTLPEHRPNPEEGGASKSLFFPDEAINKHPRFGTLTRNIRHRRGEKVVINVPIFKDKNTPSPFVETFPEDAEASKASQPDHIYMDAMGFGMGNCCLQVTFQACSISEARYLYDQLATICPIVMALSAASPFYRGYVSDIDCRWGVISASVDDRTREERGLEPLKNNRFRISKSRYDSIDSYLSKCGEKYNDIDLTIDKEIYEQLLEEGIDHLLAQHVAHLFIRDPLTLFEEKIHLDDANESDHFENIQSTNWQTMRFKPPPPNSDIGWRVEFRPMEVQLTDFENSAYVVFVVLLTRVILSYKLDFLIPLSKVDENMKVAQKRDAVLQGMFYFRKDICKGGNAVVDGCSKAQSSSEPAAEEYTLMSIDTIINGKEGVFPGLIPILNSYLENMEVDVDTRCSILNYLKLIKKRASGELMTVARWMREFIANHPDYKQDSVITDEINYSLIWKCNQIADELCECPELLGSGFRKAKYSGGKSDPSA</sequence>
<organism>
    <name type="scientific">Mus musculus</name>
    <name type="common">Mouse</name>
    <dbReference type="NCBI Taxonomy" id="10090"/>
    <lineage>
        <taxon>Eukaryota</taxon>
        <taxon>Metazoa</taxon>
        <taxon>Chordata</taxon>
        <taxon>Craniata</taxon>
        <taxon>Vertebrata</taxon>
        <taxon>Euteleostomi</taxon>
        <taxon>Mammalia</taxon>
        <taxon>Eutheria</taxon>
        <taxon>Euarchontoglires</taxon>
        <taxon>Glires</taxon>
        <taxon>Rodentia</taxon>
        <taxon>Myomorpha</taxon>
        <taxon>Muroidea</taxon>
        <taxon>Muridae</taxon>
        <taxon>Murinae</taxon>
        <taxon>Mus</taxon>
        <taxon>Mus</taxon>
    </lineage>
</organism>
<accession>P97494</accession>
<accession>O09166</accession>
<accession>Q8VCS5</accession>
<feature type="chain" id="PRO_0000192564" description="Glutamate--cysteine ligase catalytic subunit">
    <location>
        <begin position="1"/>
        <end position="637"/>
    </location>
</feature>
<feature type="modified residue" description="N-acetylmethionine" evidence="1">
    <location>
        <position position="1"/>
    </location>
</feature>
<feature type="modified residue" description="Phosphoserine" evidence="1">
    <location>
        <position position="5"/>
    </location>
</feature>
<feature type="modified residue" description="Phosphoserine" evidence="1">
    <location>
        <position position="8"/>
    </location>
</feature>
<feature type="sequence conflict" description="In Ref. 1; AAB42020." evidence="3" ref="1">
    <original>Q</original>
    <variation>H</variation>
    <location>
        <position position="6"/>
    </location>
</feature>
<feature type="sequence conflict" description="In Ref. 1; AAB42020." evidence="3" ref="1">
    <original>HG</original>
    <variation>RD</variation>
    <location>
        <begin position="25"/>
        <end position="26"/>
    </location>
</feature>
<feature type="sequence conflict" description="In Ref. 3; AAH19374." evidence="3" ref="3">
    <original>H</original>
    <variation>Q</variation>
    <location>
        <position position="32"/>
    </location>
</feature>
<feature type="sequence conflict" description="In Ref. 1; AAB42020." evidence="3" ref="1">
    <original>G</original>
    <variation>E</variation>
    <location>
        <position position="500"/>
    </location>
</feature>
<comment type="function">
    <text evidence="2">Catalyzes the ATP-dependent ligation of L-glutamate and L-cysteine and participates in the first and rate-limiting step in glutathione biosynthesis.</text>
</comment>
<comment type="catalytic activity">
    <reaction evidence="2">
        <text>L-cysteine + L-glutamate + ATP = gamma-L-glutamyl-L-cysteine + ADP + phosphate + H(+)</text>
        <dbReference type="Rhea" id="RHEA:13285"/>
        <dbReference type="ChEBI" id="CHEBI:15378"/>
        <dbReference type="ChEBI" id="CHEBI:29985"/>
        <dbReference type="ChEBI" id="CHEBI:30616"/>
        <dbReference type="ChEBI" id="CHEBI:35235"/>
        <dbReference type="ChEBI" id="CHEBI:43474"/>
        <dbReference type="ChEBI" id="CHEBI:58173"/>
        <dbReference type="ChEBI" id="CHEBI:456216"/>
        <dbReference type="EC" id="6.3.2.2"/>
    </reaction>
    <physiologicalReaction direction="left-to-right" evidence="2">
        <dbReference type="Rhea" id="RHEA:13286"/>
    </physiologicalReaction>
</comment>
<comment type="catalytic activity">
    <reaction evidence="2">
        <text>(2S)-2-aminobutanoate + L-glutamate + ATP = gamma-L-glutamyl-(2S)-2-aminobutanoate + ADP + phosphate + H(+)</text>
        <dbReference type="Rhea" id="RHEA:72067"/>
        <dbReference type="ChEBI" id="CHEBI:15378"/>
        <dbReference type="ChEBI" id="CHEBI:29985"/>
        <dbReference type="ChEBI" id="CHEBI:30616"/>
        <dbReference type="ChEBI" id="CHEBI:43474"/>
        <dbReference type="ChEBI" id="CHEBI:74359"/>
        <dbReference type="ChEBI" id="CHEBI:189406"/>
        <dbReference type="ChEBI" id="CHEBI:456216"/>
    </reaction>
    <physiologicalReaction direction="left-to-right" evidence="2">
        <dbReference type="Rhea" id="RHEA:72068"/>
    </physiologicalReaction>
</comment>
<comment type="activity regulation">
    <text>Feedback inhibition by glutathione.</text>
</comment>
<comment type="pathway">
    <text evidence="2">Sulfur metabolism; glutathione biosynthesis; glutathione from L-cysteine and L-glutamate: step 1/2.</text>
</comment>
<comment type="subunit">
    <text>Heterodimer of a catalytic heavy chain and a regulatory light chain.</text>
</comment>
<comment type="similarity">
    <text evidence="3">Belongs to the glutamate--cysteine ligase type 3 family.</text>
</comment>
<reference key="1">
    <citation type="journal article" date="1997" name="NeuroReport">
        <title>Cloning/brain localization of mouse glutamylcysteine synthetase heavy chain mRNA.</title>
        <authorList>
            <person name="Kang Y."/>
            <person name="Oiao X."/>
            <person name="Jurma O."/>
            <person name="Knusel B."/>
            <person name="Andersen J.K."/>
        </authorList>
    </citation>
    <scope>NUCLEOTIDE SEQUENCE [MRNA]</scope>
    <source>
        <tissue>Liver</tissue>
    </source>
</reference>
<reference key="2">
    <citation type="journal article" date="1997" name="Biochim. Biophys. Acta">
        <title>Molecular cloning and sequencing of the cDNA encoding the catalytic subunit of mouse glutamate-cysteine ligase.</title>
        <authorList>
            <person name="Reid L.L."/>
            <person name="Botta D."/>
            <person name="Lu Y."/>
            <person name="Gallagher E.P."/>
            <person name="Kavanagh T.J."/>
        </authorList>
    </citation>
    <scope>NUCLEOTIDE SEQUENCE [MRNA]</scope>
    <source>
        <strain>C57BL/6J</strain>
        <tissue>Kidney</tissue>
    </source>
</reference>
<reference key="3">
    <citation type="journal article" date="2004" name="Genome Res.">
        <title>The status, quality, and expansion of the NIH full-length cDNA project: the Mammalian Gene Collection (MGC).</title>
        <authorList>
            <consortium name="The MGC Project Team"/>
        </authorList>
    </citation>
    <scope>NUCLEOTIDE SEQUENCE [LARGE SCALE MRNA]</scope>
    <source>
        <tissue>Liver</tissue>
    </source>
</reference>
<reference key="4">
    <citation type="journal article" date="2006" name="J. Biol. Chem.">
        <title>Differential metabolomics reveals ophthalmic acid as an oxidative stress biomarker indicating hepatic glutathione consumption.</title>
        <authorList>
            <person name="Soga T."/>
            <person name="Baran R."/>
            <person name="Suematsu M."/>
            <person name="Ueno Y."/>
            <person name="Ikeda S."/>
            <person name="Sakurakawa T."/>
            <person name="Kakazu Y."/>
            <person name="Ishikawa T."/>
            <person name="Robert M."/>
            <person name="Nishioka T."/>
            <person name="Tomita M."/>
        </authorList>
    </citation>
    <scope>FUNCTION</scope>
    <scope>CATALYTIC ACTIVITY</scope>
</reference>
<reference key="5">
    <citation type="journal article" date="2010" name="Cell">
        <title>A tissue-specific atlas of mouse protein phosphorylation and expression.</title>
        <authorList>
            <person name="Huttlin E.L."/>
            <person name="Jedrychowski M.P."/>
            <person name="Elias J.E."/>
            <person name="Goswami T."/>
            <person name="Rad R."/>
            <person name="Beausoleil S.A."/>
            <person name="Villen J."/>
            <person name="Haas W."/>
            <person name="Sowa M.E."/>
            <person name="Gygi S.P."/>
        </authorList>
    </citation>
    <scope>IDENTIFICATION BY MASS SPECTROMETRY [LARGE SCALE ANALYSIS]</scope>
    <source>
        <tissue>Brain</tissue>
        <tissue>Brown adipose tissue</tissue>
        <tissue>Kidney</tissue>
        <tissue>Liver</tissue>
        <tissue>Lung</tissue>
        <tissue>Pancreas</tissue>
        <tissue>Spleen</tissue>
        <tissue>Testis</tissue>
    </source>
</reference>
<gene>
    <name evidence="4" type="primary">Gclc</name>
    <name type="synonym">Glclc</name>
</gene>
<evidence type="ECO:0000250" key="1">
    <source>
        <dbReference type="UniProtKB" id="P48506"/>
    </source>
</evidence>
<evidence type="ECO:0000269" key="2">
    <source>
    </source>
</evidence>
<evidence type="ECO:0000305" key="3"/>
<evidence type="ECO:0000312" key="4">
    <source>
        <dbReference type="MGI" id="MGI:104990"/>
    </source>
</evidence>
<dbReference type="EC" id="6.3.2.2" evidence="2"/>
<dbReference type="EMBL" id="U85414">
    <property type="protein sequence ID" value="AAB42020.1"/>
    <property type="molecule type" value="mRNA"/>
</dbReference>
<dbReference type="EMBL" id="U85498">
    <property type="protein sequence ID" value="AAB52542.1"/>
    <property type="molecule type" value="mRNA"/>
</dbReference>
<dbReference type="EMBL" id="BC019374">
    <property type="protein sequence ID" value="AAH19374.1"/>
    <property type="molecule type" value="mRNA"/>
</dbReference>
<dbReference type="CCDS" id="CCDS23354.1"/>
<dbReference type="RefSeq" id="NP_034425.1">
    <property type="nucleotide sequence ID" value="NM_010295.2"/>
</dbReference>
<dbReference type="SMR" id="P97494"/>
<dbReference type="BioGRID" id="199940">
    <property type="interactions" value="4"/>
</dbReference>
<dbReference type="FunCoup" id="P97494">
    <property type="interactions" value="1136"/>
</dbReference>
<dbReference type="STRING" id="10090.ENSMUSP00000034905"/>
<dbReference type="ChEMBL" id="CHEMBL2366483"/>
<dbReference type="GlyGen" id="P97494">
    <property type="glycosylation" value="1 site, 1 O-linked glycan (1 site)"/>
</dbReference>
<dbReference type="iPTMnet" id="P97494"/>
<dbReference type="PhosphoSitePlus" id="P97494"/>
<dbReference type="SwissPalm" id="P97494"/>
<dbReference type="CPTAC" id="non-CPTAC-3976"/>
<dbReference type="jPOST" id="P97494"/>
<dbReference type="PaxDb" id="10090-ENSMUSP00000034905"/>
<dbReference type="PeptideAtlas" id="P97494"/>
<dbReference type="ProteomicsDB" id="269639"/>
<dbReference type="Pumba" id="P97494"/>
<dbReference type="Antibodypedia" id="4035">
    <property type="antibodies" value="424 antibodies from 35 providers"/>
</dbReference>
<dbReference type="DNASU" id="14629"/>
<dbReference type="Ensembl" id="ENSMUST00000034905.9">
    <property type="protein sequence ID" value="ENSMUSP00000034905.9"/>
    <property type="gene ID" value="ENSMUSG00000032350.10"/>
</dbReference>
<dbReference type="GeneID" id="14629"/>
<dbReference type="KEGG" id="mmu:14629"/>
<dbReference type="UCSC" id="uc009qtm.2">
    <property type="organism name" value="mouse"/>
</dbReference>
<dbReference type="AGR" id="MGI:104990"/>
<dbReference type="CTD" id="2729"/>
<dbReference type="MGI" id="MGI:104990">
    <property type="gene designation" value="Gclc"/>
</dbReference>
<dbReference type="VEuPathDB" id="HostDB:ENSMUSG00000032350"/>
<dbReference type="eggNOG" id="KOG3754">
    <property type="taxonomic scope" value="Eukaryota"/>
</dbReference>
<dbReference type="GeneTree" id="ENSGT00390000011908"/>
<dbReference type="HOGENOM" id="CLU_010467_0_0_1"/>
<dbReference type="InParanoid" id="P97494"/>
<dbReference type="OMA" id="IAHMFIR"/>
<dbReference type="OrthoDB" id="7939818at2759"/>
<dbReference type="PhylomeDB" id="P97494"/>
<dbReference type="TreeFam" id="TF105644"/>
<dbReference type="BRENDA" id="6.3.2.2">
    <property type="organism ID" value="3474"/>
</dbReference>
<dbReference type="Reactome" id="R-MMU-174403">
    <property type="pathway name" value="Glutathione synthesis and recycling"/>
</dbReference>
<dbReference type="SABIO-RK" id="P97494"/>
<dbReference type="UniPathway" id="UPA00142">
    <property type="reaction ID" value="UER00209"/>
</dbReference>
<dbReference type="BioGRID-ORCS" id="14629">
    <property type="hits" value="22 hits in 79 CRISPR screens"/>
</dbReference>
<dbReference type="ChiTaRS" id="Gclc">
    <property type="organism name" value="mouse"/>
</dbReference>
<dbReference type="PRO" id="PR:P97494"/>
<dbReference type="Proteomes" id="UP000000589">
    <property type="component" value="Chromosome 9"/>
</dbReference>
<dbReference type="RNAct" id="P97494">
    <property type="molecule type" value="protein"/>
</dbReference>
<dbReference type="Bgee" id="ENSMUSG00000032350">
    <property type="expression patterns" value="Expressed in epithelium of stomach and 278 other cell types or tissues"/>
</dbReference>
<dbReference type="ExpressionAtlas" id="P97494">
    <property type="expression patterns" value="baseline and differential"/>
</dbReference>
<dbReference type="GO" id="GO:0005829">
    <property type="term" value="C:cytosol"/>
    <property type="evidence" value="ECO:0000314"/>
    <property type="project" value="MGI"/>
</dbReference>
<dbReference type="GO" id="GO:0017109">
    <property type="term" value="C:glutamate-cysteine ligase complex"/>
    <property type="evidence" value="ECO:0000314"/>
    <property type="project" value="MGI"/>
</dbReference>
<dbReference type="GO" id="GO:0005739">
    <property type="term" value="C:mitochondrion"/>
    <property type="evidence" value="ECO:0007669"/>
    <property type="project" value="GOC"/>
</dbReference>
<dbReference type="GO" id="GO:0043531">
    <property type="term" value="F:ADP binding"/>
    <property type="evidence" value="ECO:0000250"/>
    <property type="project" value="UniProtKB"/>
</dbReference>
<dbReference type="GO" id="GO:0005524">
    <property type="term" value="F:ATP binding"/>
    <property type="evidence" value="ECO:0007669"/>
    <property type="project" value="UniProtKB-KW"/>
</dbReference>
<dbReference type="GO" id="GO:0016595">
    <property type="term" value="F:glutamate binding"/>
    <property type="evidence" value="ECO:0000250"/>
    <property type="project" value="UniProtKB"/>
</dbReference>
<dbReference type="GO" id="GO:0004357">
    <property type="term" value="F:glutamate-cysteine ligase activity"/>
    <property type="evidence" value="ECO:0000314"/>
    <property type="project" value="MGI"/>
</dbReference>
<dbReference type="GO" id="GO:0000287">
    <property type="term" value="F:magnesium ion binding"/>
    <property type="evidence" value="ECO:0000250"/>
    <property type="project" value="UniProtKB"/>
</dbReference>
<dbReference type="GO" id="GO:0044877">
    <property type="term" value="F:protein-containing complex binding"/>
    <property type="evidence" value="ECO:0007669"/>
    <property type="project" value="Ensembl"/>
</dbReference>
<dbReference type="GO" id="GO:0097746">
    <property type="term" value="P:blood vessel diameter maintenance"/>
    <property type="evidence" value="ECO:0000250"/>
    <property type="project" value="UniProtKB"/>
</dbReference>
<dbReference type="GO" id="GO:0045454">
    <property type="term" value="P:cell redox homeostasis"/>
    <property type="evidence" value="ECO:0000250"/>
    <property type="project" value="UniProtKB"/>
</dbReference>
<dbReference type="GO" id="GO:0044344">
    <property type="term" value="P:cellular response to fibroblast growth factor stimulus"/>
    <property type="evidence" value="ECO:0007669"/>
    <property type="project" value="Ensembl"/>
</dbReference>
<dbReference type="GO" id="GO:0071372">
    <property type="term" value="P:cellular response to follicle-stimulating hormone stimulus"/>
    <property type="evidence" value="ECO:0007669"/>
    <property type="project" value="Ensembl"/>
</dbReference>
<dbReference type="GO" id="GO:0071333">
    <property type="term" value="P:cellular response to glucose stimulus"/>
    <property type="evidence" value="ECO:0007669"/>
    <property type="project" value="Ensembl"/>
</dbReference>
<dbReference type="GO" id="GO:0035729">
    <property type="term" value="P:cellular response to hepatocyte growth factor stimulus"/>
    <property type="evidence" value="ECO:0007669"/>
    <property type="project" value="Ensembl"/>
</dbReference>
<dbReference type="GO" id="GO:0032869">
    <property type="term" value="P:cellular response to insulin stimulus"/>
    <property type="evidence" value="ECO:0007669"/>
    <property type="project" value="Ensembl"/>
</dbReference>
<dbReference type="GO" id="GO:0071260">
    <property type="term" value="P:cellular response to mechanical stimulus"/>
    <property type="evidence" value="ECO:0007669"/>
    <property type="project" value="Ensembl"/>
</dbReference>
<dbReference type="GO" id="GO:0097069">
    <property type="term" value="P:cellular response to thyroxine stimulus"/>
    <property type="evidence" value="ECO:0007669"/>
    <property type="project" value="Ensembl"/>
</dbReference>
<dbReference type="GO" id="GO:0006534">
    <property type="term" value="P:cysteine metabolic process"/>
    <property type="evidence" value="ECO:0000250"/>
    <property type="project" value="UniProtKB"/>
</dbReference>
<dbReference type="GO" id="GO:0006536">
    <property type="term" value="P:glutamate metabolic process"/>
    <property type="evidence" value="ECO:0000250"/>
    <property type="project" value="UniProtKB"/>
</dbReference>
<dbReference type="GO" id="GO:0006750">
    <property type="term" value="P:glutathione biosynthetic process"/>
    <property type="evidence" value="ECO:0000314"/>
    <property type="project" value="MGI"/>
</dbReference>
<dbReference type="GO" id="GO:0006749">
    <property type="term" value="P:glutathione metabolic process"/>
    <property type="evidence" value="ECO:0000315"/>
    <property type="project" value="MGI"/>
</dbReference>
<dbReference type="GO" id="GO:0019852">
    <property type="term" value="P:L-ascorbic acid metabolic process"/>
    <property type="evidence" value="ECO:0000315"/>
    <property type="project" value="MGI"/>
</dbReference>
<dbReference type="GO" id="GO:0043066">
    <property type="term" value="P:negative regulation of apoptotic process"/>
    <property type="evidence" value="ECO:0000250"/>
    <property type="project" value="UniProtKB"/>
</dbReference>
<dbReference type="GO" id="GO:0045892">
    <property type="term" value="P:negative regulation of DNA-templated transcription"/>
    <property type="evidence" value="ECO:0000250"/>
    <property type="project" value="UniProtKB"/>
</dbReference>
<dbReference type="GO" id="GO:2001237">
    <property type="term" value="P:negative regulation of extrinsic apoptotic signaling pathway"/>
    <property type="evidence" value="ECO:0000316"/>
    <property type="project" value="MGI"/>
</dbReference>
<dbReference type="GO" id="GO:2000490">
    <property type="term" value="P:negative regulation of hepatic stellate cell activation"/>
    <property type="evidence" value="ECO:0007669"/>
    <property type="project" value="Ensembl"/>
</dbReference>
<dbReference type="GO" id="GO:1901029">
    <property type="term" value="P:negative regulation of mitochondrial outer membrane permeabilization involved in apoptotic signaling pathway"/>
    <property type="evidence" value="ECO:0000316"/>
    <property type="project" value="MGI"/>
</dbReference>
<dbReference type="GO" id="GO:0043524">
    <property type="term" value="P:negative regulation of neuron apoptotic process"/>
    <property type="evidence" value="ECO:0007669"/>
    <property type="project" value="Ensembl"/>
</dbReference>
<dbReference type="GO" id="GO:0031397">
    <property type="term" value="P:negative regulation of protein ubiquitination"/>
    <property type="evidence" value="ECO:0000315"/>
    <property type="project" value="MGI"/>
</dbReference>
<dbReference type="GO" id="GO:0032436">
    <property type="term" value="P:positive regulation of proteasomal ubiquitin-dependent protein catabolic process"/>
    <property type="evidence" value="ECO:0000315"/>
    <property type="project" value="MGI"/>
</dbReference>
<dbReference type="GO" id="GO:0051900">
    <property type="term" value="P:regulation of mitochondrial depolarization"/>
    <property type="evidence" value="ECO:0000316"/>
    <property type="project" value="MGI"/>
</dbReference>
<dbReference type="GO" id="GO:0014823">
    <property type="term" value="P:response to activity"/>
    <property type="evidence" value="ECO:0007669"/>
    <property type="project" value="Ensembl"/>
</dbReference>
<dbReference type="GO" id="GO:0046685">
    <property type="term" value="P:response to arsenic-containing substance"/>
    <property type="evidence" value="ECO:0000315"/>
    <property type="project" value="MGI"/>
</dbReference>
<dbReference type="GO" id="GO:0046686">
    <property type="term" value="P:response to cadmium ion"/>
    <property type="evidence" value="ECO:0007669"/>
    <property type="project" value="Ensembl"/>
</dbReference>
<dbReference type="GO" id="GO:0009408">
    <property type="term" value="P:response to heat"/>
    <property type="evidence" value="ECO:0000250"/>
    <property type="project" value="UniProtKB"/>
</dbReference>
<dbReference type="GO" id="GO:0009725">
    <property type="term" value="P:response to hormone"/>
    <property type="evidence" value="ECO:0000250"/>
    <property type="project" value="UniProtKB"/>
</dbReference>
<dbReference type="GO" id="GO:0044752">
    <property type="term" value="P:response to human chorionic gonadotropin"/>
    <property type="evidence" value="ECO:0007669"/>
    <property type="project" value="Ensembl"/>
</dbReference>
<dbReference type="GO" id="GO:0070555">
    <property type="term" value="P:response to interleukin-1"/>
    <property type="evidence" value="ECO:0007669"/>
    <property type="project" value="Ensembl"/>
</dbReference>
<dbReference type="GO" id="GO:0051409">
    <property type="term" value="P:response to nitrosative stress"/>
    <property type="evidence" value="ECO:0007669"/>
    <property type="project" value="Ensembl"/>
</dbReference>
<dbReference type="GO" id="GO:0007584">
    <property type="term" value="P:response to nutrient"/>
    <property type="evidence" value="ECO:0007669"/>
    <property type="project" value="Ensembl"/>
</dbReference>
<dbReference type="GO" id="GO:0006979">
    <property type="term" value="P:response to oxidative stress"/>
    <property type="evidence" value="ECO:0000250"/>
    <property type="project" value="UniProtKB"/>
</dbReference>
<dbReference type="GO" id="GO:0009410">
    <property type="term" value="P:response to xenobiotic stimulus"/>
    <property type="evidence" value="ECO:0000315"/>
    <property type="project" value="MGI"/>
</dbReference>
<dbReference type="FunFam" id="1.10.8.960:FF:000001">
    <property type="entry name" value="Glutamate--cysteine ligase catalytic subunit"/>
    <property type="match status" value="1"/>
</dbReference>
<dbReference type="FunFam" id="3.30.590.50:FF:000002">
    <property type="entry name" value="Glutamate--cysteine ligase catalytic subunit"/>
    <property type="match status" value="1"/>
</dbReference>
<dbReference type="FunFam" id="3.30.590.50:FF:000003">
    <property type="entry name" value="Glutamate--cysteine ligase catalytic subunit"/>
    <property type="match status" value="1"/>
</dbReference>
<dbReference type="Gene3D" id="1.10.8.960">
    <property type="match status" value="1"/>
</dbReference>
<dbReference type="Gene3D" id="3.30.590.50">
    <property type="match status" value="2"/>
</dbReference>
<dbReference type="InterPro" id="IPR004308">
    <property type="entry name" value="GCS"/>
</dbReference>
<dbReference type="InterPro" id="IPR014746">
    <property type="entry name" value="Gln_synth/guanido_kin_cat_dom"/>
</dbReference>
<dbReference type="PANTHER" id="PTHR11164">
    <property type="entry name" value="GLUTAMATE CYSTEINE LIGASE"/>
    <property type="match status" value="1"/>
</dbReference>
<dbReference type="PANTHER" id="PTHR11164:SF0">
    <property type="entry name" value="GLUTAMATE--CYSTEINE LIGASE CATALYTIC SUBUNIT"/>
    <property type="match status" value="1"/>
</dbReference>
<dbReference type="Pfam" id="PF03074">
    <property type="entry name" value="GCS"/>
    <property type="match status" value="1"/>
</dbReference>
<dbReference type="SUPFAM" id="SSF55931">
    <property type="entry name" value="Glutamine synthetase/guanido kinase"/>
    <property type="match status" value="1"/>
</dbReference>
<protein>
    <recommendedName>
        <fullName evidence="3">Glutamate--cysteine ligase catalytic subunit</fullName>
        <ecNumber evidence="2">6.3.2.2</ecNumber>
    </recommendedName>
    <alternativeName>
        <fullName>GCS heavy chain</fullName>
    </alternativeName>
    <alternativeName>
        <fullName>Gamma-ECS</fullName>
    </alternativeName>
    <alternativeName>
        <fullName>Gamma-glutamylcysteine synthetase</fullName>
    </alternativeName>
</protein>
<keyword id="KW-0007">Acetylation</keyword>
<keyword id="KW-0067">ATP-binding</keyword>
<keyword id="KW-0317">Glutathione biosynthesis</keyword>
<keyword id="KW-0436">Ligase</keyword>
<keyword id="KW-0547">Nucleotide-binding</keyword>
<keyword id="KW-0597">Phosphoprotein</keyword>
<keyword id="KW-1185">Reference proteome</keyword>
<name>GSH1_MOUSE</name>
<proteinExistence type="evidence at protein level"/>